<name>PBL26_ARATH</name>
<reference key="1">
    <citation type="journal article" date="2000" name="Nature">
        <title>Sequence and analysis of chromosome 3 of the plant Arabidopsis thaliana.</title>
        <authorList>
            <person name="Salanoubat M."/>
            <person name="Lemcke K."/>
            <person name="Rieger M."/>
            <person name="Ansorge W."/>
            <person name="Unseld M."/>
            <person name="Fartmann B."/>
            <person name="Valle G."/>
            <person name="Bloecker H."/>
            <person name="Perez-Alonso M."/>
            <person name="Obermaier B."/>
            <person name="Delseny M."/>
            <person name="Boutry M."/>
            <person name="Grivell L.A."/>
            <person name="Mache R."/>
            <person name="Puigdomenech P."/>
            <person name="De Simone V."/>
            <person name="Choisne N."/>
            <person name="Artiguenave F."/>
            <person name="Robert C."/>
            <person name="Brottier P."/>
            <person name="Wincker P."/>
            <person name="Cattolico L."/>
            <person name="Weissenbach J."/>
            <person name="Saurin W."/>
            <person name="Quetier F."/>
            <person name="Schaefer M."/>
            <person name="Mueller-Auer S."/>
            <person name="Gabel C."/>
            <person name="Fuchs M."/>
            <person name="Benes V."/>
            <person name="Wurmbach E."/>
            <person name="Drzonek H."/>
            <person name="Erfle H."/>
            <person name="Jordan N."/>
            <person name="Bangert S."/>
            <person name="Wiedelmann R."/>
            <person name="Kranz H."/>
            <person name="Voss H."/>
            <person name="Holland R."/>
            <person name="Brandt P."/>
            <person name="Nyakatura G."/>
            <person name="Vezzi A."/>
            <person name="D'Angelo M."/>
            <person name="Pallavicini A."/>
            <person name="Toppo S."/>
            <person name="Simionati B."/>
            <person name="Conrad A."/>
            <person name="Hornischer K."/>
            <person name="Kauer G."/>
            <person name="Loehnert T.-H."/>
            <person name="Nordsiek G."/>
            <person name="Reichelt J."/>
            <person name="Scharfe M."/>
            <person name="Schoen O."/>
            <person name="Bargues M."/>
            <person name="Terol J."/>
            <person name="Climent J."/>
            <person name="Navarro P."/>
            <person name="Collado C."/>
            <person name="Perez-Perez A."/>
            <person name="Ottenwaelder B."/>
            <person name="Duchemin D."/>
            <person name="Cooke R."/>
            <person name="Laudie M."/>
            <person name="Berger-Llauro C."/>
            <person name="Purnelle B."/>
            <person name="Masuy D."/>
            <person name="de Haan M."/>
            <person name="Maarse A.C."/>
            <person name="Alcaraz J.-P."/>
            <person name="Cottet A."/>
            <person name="Casacuberta E."/>
            <person name="Monfort A."/>
            <person name="Argiriou A."/>
            <person name="Flores M."/>
            <person name="Liguori R."/>
            <person name="Vitale D."/>
            <person name="Mannhaupt G."/>
            <person name="Haase D."/>
            <person name="Schoof H."/>
            <person name="Rudd S."/>
            <person name="Zaccaria P."/>
            <person name="Mewes H.-W."/>
            <person name="Mayer K.F.X."/>
            <person name="Kaul S."/>
            <person name="Town C.D."/>
            <person name="Koo H.L."/>
            <person name="Tallon L.J."/>
            <person name="Jenkins J."/>
            <person name="Rooney T."/>
            <person name="Rizzo M."/>
            <person name="Walts A."/>
            <person name="Utterback T."/>
            <person name="Fujii C.Y."/>
            <person name="Shea T.P."/>
            <person name="Creasy T.H."/>
            <person name="Haas B."/>
            <person name="Maiti R."/>
            <person name="Wu D."/>
            <person name="Peterson J."/>
            <person name="Van Aken S."/>
            <person name="Pai G."/>
            <person name="Militscher J."/>
            <person name="Sellers P."/>
            <person name="Gill J.E."/>
            <person name="Feldblyum T.V."/>
            <person name="Preuss D."/>
            <person name="Lin X."/>
            <person name="Nierman W.C."/>
            <person name="Salzberg S.L."/>
            <person name="White O."/>
            <person name="Venter J.C."/>
            <person name="Fraser C.M."/>
            <person name="Kaneko T."/>
            <person name="Nakamura Y."/>
            <person name="Sato S."/>
            <person name="Kato T."/>
            <person name="Asamizu E."/>
            <person name="Sasamoto S."/>
            <person name="Kimura T."/>
            <person name="Idesawa K."/>
            <person name="Kawashima K."/>
            <person name="Kishida Y."/>
            <person name="Kiyokawa C."/>
            <person name="Kohara M."/>
            <person name="Matsumoto M."/>
            <person name="Matsuno A."/>
            <person name="Muraki A."/>
            <person name="Nakayama S."/>
            <person name="Nakazaki N."/>
            <person name="Shinpo S."/>
            <person name="Takeuchi C."/>
            <person name="Wada T."/>
            <person name="Watanabe A."/>
            <person name="Yamada M."/>
            <person name="Yasuda M."/>
            <person name="Tabata S."/>
        </authorList>
    </citation>
    <scope>NUCLEOTIDE SEQUENCE [LARGE SCALE GENOMIC DNA]</scope>
    <source>
        <strain>cv. Columbia</strain>
    </source>
</reference>
<reference key="2">
    <citation type="journal article" date="2017" name="Plant J.">
        <title>Araport11: a complete reannotation of the Arabidopsis thaliana reference genome.</title>
        <authorList>
            <person name="Cheng C.Y."/>
            <person name="Krishnakumar V."/>
            <person name="Chan A.P."/>
            <person name="Thibaud-Nissen F."/>
            <person name="Schobel S."/>
            <person name="Town C.D."/>
        </authorList>
    </citation>
    <scope>GENOME REANNOTATION</scope>
    <source>
        <strain>cv. Columbia</strain>
    </source>
</reference>
<reference key="3">
    <citation type="journal article" date="2003" name="Science">
        <title>Empirical analysis of transcriptional activity in the Arabidopsis genome.</title>
        <authorList>
            <person name="Yamada K."/>
            <person name="Lim J."/>
            <person name="Dale J.M."/>
            <person name="Chen H."/>
            <person name="Shinn P."/>
            <person name="Palm C.J."/>
            <person name="Southwick A.M."/>
            <person name="Wu H.C."/>
            <person name="Kim C.J."/>
            <person name="Nguyen M."/>
            <person name="Pham P.K."/>
            <person name="Cheuk R.F."/>
            <person name="Karlin-Newmann G."/>
            <person name="Liu S.X."/>
            <person name="Lam B."/>
            <person name="Sakano H."/>
            <person name="Wu T."/>
            <person name="Yu G."/>
            <person name="Miranda M."/>
            <person name="Quach H.L."/>
            <person name="Tripp M."/>
            <person name="Chang C.H."/>
            <person name="Lee J.M."/>
            <person name="Toriumi M.J."/>
            <person name="Chan M.M."/>
            <person name="Tang C.C."/>
            <person name="Onodera C.S."/>
            <person name="Deng J.M."/>
            <person name="Akiyama K."/>
            <person name="Ansari Y."/>
            <person name="Arakawa T."/>
            <person name="Banh J."/>
            <person name="Banno F."/>
            <person name="Bowser L."/>
            <person name="Brooks S.Y."/>
            <person name="Carninci P."/>
            <person name="Chao Q."/>
            <person name="Choy N."/>
            <person name="Enju A."/>
            <person name="Goldsmith A.D."/>
            <person name="Gurjal M."/>
            <person name="Hansen N.F."/>
            <person name="Hayashizaki Y."/>
            <person name="Johnson-Hopson C."/>
            <person name="Hsuan V.W."/>
            <person name="Iida K."/>
            <person name="Karnes M."/>
            <person name="Khan S."/>
            <person name="Koesema E."/>
            <person name="Ishida J."/>
            <person name="Jiang P.X."/>
            <person name="Jones T."/>
            <person name="Kawai J."/>
            <person name="Kamiya A."/>
            <person name="Meyers C."/>
            <person name="Nakajima M."/>
            <person name="Narusaka M."/>
            <person name="Seki M."/>
            <person name="Sakurai T."/>
            <person name="Satou M."/>
            <person name="Tamse R."/>
            <person name="Vaysberg M."/>
            <person name="Wallender E.K."/>
            <person name="Wong C."/>
            <person name="Yamamura Y."/>
            <person name="Yuan S."/>
            <person name="Shinozaki K."/>
            <person name="Davis R.W."/>
            <person name="Theologis A."/>
            <person name="Ecker J.R."/>
        </authorList>
    </citation>
    <scope>NUCLEOTIDE SEQUENCE [LARGE SCALE MRNA]</scope>
    <source>
        <strain>cv. Columbia</strain>
    </source>
</reference>
<reference key="4">
    <citation type="journal article" date="2010" name="Cell Host Microbe">
        <title>Receptor-like cytoplasmic kinases integrate signaling from multiple plant immune receptors and are targeted by a Pseudomonas syringae effector.</title>
        <authorList>
            <person name="Zhang J."/>
            <person name="Li W."/>
            <person name="Xiang T."/>
            <person name="Liu Z."/>
            <person name="Laluk K."/>
            <person name="Ding X."/>
            <person name="Zou Y."/>
            <person name="Gao M."/>
            <person name="Zhang X."/>
            <person name="Chen S."/>
            <person name="Mengiste T."/>
            <person name="Zhang Y."/>
            <person name="Zhou J.M."/>
        </authorList>
    </citation>
    <scope>GENE FAMILY</scope>
    <scope>NOMENCLATURE</scope>
</reference>
<accession>Q9SFT7</accession>
<accession>Q84VY1</accession>
<keyword id="KW-0067">ATP-binding</keyword>
<keyword id="KW-1003">Cell membrane</keyword>
<keyword id="KW-0418">Kinase</keyword>
<keyword id="KW-0449">Lipoprotein</keyword>
<keyword id="KW-0472">Membrane</keyword>
<keyword id="KW-0547">Nucleotide-binding</keyword>
<keyword id="KW-0564">Palmitate</keyword>
<keyword id="KW-0597">Phosphoprotein</keyword>
<keyword id="KW-0611">Plant defense</keyword>
<keyword id="KW-1185">Reference proteome</keyword>
<keyword id="KW-0723">Serine/threonine-protein kinase</keyword>
<keyword id="KW-0808">Transferase</keyword>
<gene>
    <name evidence="5" type="primary">PBL26</name>
    <name type="ordered locus">At3g07070</name>
    <name type="ORF">F17A9.25</name>
    <name type="ORF">T1B9.28</name>
</gene>
<dbReference type="EC" id="2.7.11.1" evidence="6"/>
<dbReference type="EMBL" id="AC012395">
    <property type="protein sequence ID" value="AAF20239.1"/>
    <property type="molecule type" value="Genomic_DNA"/>
</dbReference>
<dbReference type="EMBL" id="CP002686">
    <property type="protein sequence ID" value="AEE74495.1"/>
    <property type="molecule type" value="Genomic_DNA"/>
</dbReference>
<dbReference type="EMBL" id="BT004627">
    <property type="protein sequence ID" value="AAO42873.1"/>
    <property type="molecule type" value="mRNA"/>
</dbReference>
<dbReference type="RefSeq" id="NP_566298.1">
    <property type="nucleotide sequence ID" value="NM_111587.3"/>
</dbReference>
<dbReference type="SMR" id="Q9SFT7"/>
<dbReference type="FunCoup" id="Q9SFT7">
    <property type="interactions" value="789"/>
</dbReference>
<dbReference type="STRING" id="3702.Q9SFT7"/>
<dbReference type="PaxDb" id="3702-AT3G07070.1"/>
<dbReference type="ProteomicsDB" id="236437"/>
<dbReference type="EnsemblPlants" id="AT3G07070.1">
    <property type="protein sequence ID" value="AT3G07070.1"/>
    <property type="gene ID" value="AT3G07070"/>
</dbReference>
<dbReference type="GeneID" id="819893"/>
<dbReference type="Gramene" id="AT3G07070.1">
    <property type="protein sequence ID" value="AT3G07070.1"/>
    <property type="gene ID" value="AT3G07070"/>
</dbReference>
<dbReference type="KEGG" id="ath:AT3G07070"/>
<dbReference type="Araport" id="AT3G07070"/>
<dbReference type="TAIR" id="AT3G07070">
    <property type="gene designation" value="PBL26"/>
</dbReference>
<dbReference type="eggNOG" id="KOG1187">
    <property type="taxonomic scope" value="Eukaryota"/>
</dbReference>
<dbReference type="HOGENOM" id="CLU_000288_21_0_1"/>
<dbReference type="InParanoid" id="Q9SFT7"/>
<dbReference type="OMA" id="HYDDPPQ"/>
<dbReference type="OrthoDB" id="4062651at2759"/>
<dbReference type="PhylomeDB" id="Q9SFT7"/>
<dbReference type="PRO" id="PR:Q9SFT7"/>
<dbReference type="Proteomes" id="UP000006548">
    <property type="component" value="Chromosome 3"/>
</dbReference>
<dbReference type="ExpressionAtlas" id="Q9SFT7">
    <property type="expression patterns" value="baseline and differential"/>
</dbReference>
<dbReference type="GO" id="GO:0005886">
    <property type="term" value="C:plasma membrane"/>
    <property type="evidence" value="ECO:0007669"/>
    <property type="project" value="UniProtKB-SubCell"/>
</dbReference>
<dbReference type="GO" id="GO:0005524">
    <property type="term" value="F:ATP binding"/>
    <property type="evidence" value="ECO:0007669"/>
    <property type="project" value="UniProtKB-KW"/>
</dbReference>
<dbReference type="GO" id="GO:0106310">
    <property type="term" value="F:protein serine kinase activity"/>
    <property type="evidence" value="ECO:0007669"/>
    <property type="project" value="RHEA"/>
</dbReference>
<dbReference type="GO" id="GO:0004674">
    <property type="term" value="F:protein serine/threonine kinase activity"/>
    <property type="evidence" value="ECO:0007669"/>
    <property type="project" value="UniProtKB-KW"/>
</dbReference>
<dbReference type="GO" id="GO:0006952">
    <property type="term" value="P:defense response"/>
    <property type="evidence" value="ECO:0007669"/>
    <property type="project" value="UniProtKB-KW"/>
</dbReference>
<dbReference type="CDD" id="cd14066">
    <property type="entry name" value="STKc_IRAK"/>
    <property type="match status" value="1"/>
</dbReference>
<dbReference type="FunFam" id="1.10.510.10:FF:000032">
    <property type="entry name" value="Serine/threonine-protein kinase PBS1"/>
    <property type="match status" value="1"/>
</dbReference>
<dbReference type="FunFam" id="3.30.200.20:FF:000186">
    <property type="entry name" value="Serine/threonine-protein kinase PBS1"/>
    <property type="match status" value="1"/>
</dbReference>
<dbReference type="Gene3D" id="3.30.200.20">
    <property type="entry name" value="Phosphorylase Kinase, domain 1"/>
    <property type="match status" value="1"/>
</dbReference>
<dbReference type="Gene3D" id="1.10.510.10">
    <property type="entry name" value="Transferase(Phosphotransferase) domain 1"/>
    <property type="match status" value="1"/>
</dbReference>
<dbReference type="InterPro" id="IPR011009">
    <property type="entry name" value="Kinase-like_dom_sf"/>
</dbReference>
<dbReference type="InterPro" id="IPR000719">
    <property type="entry name" value="Prot_kinase_dom"/>
</dbReference>
<dbReference type="InterPro" id="IPR017441">
    <property type="entry name" value="Protein_kinase_ATP_BS"/>
</dbReference>
<dbReference type="InterPro" id="IPR008271">
    <property type="entry name" value="Ser/Thr_kinase_AS"/>
</dbReference>
<dbReference type="PANTHER" id="PTHR47985">
    <property type="entry name" value="OS07G0668900 PROTEIN"/>
    <property type="match status" value="1"/>
</dbReference>
<dbReference type="PANTHER" id="PTHR47985:SF31">
    <property type="entry name" value="SERINE_THREONINE-PROTEIN KINASE PBL26-RELATED"/>
    <property type="match status" value="1"/>
</dbReference>
<dbReference type="Pfam" id="PF00069">
    <property type="entry name" value="Pkinase"/>
    <property type="match status" value="1"/>
</dbReference>
<dbReference type="SMART" id="SM00220">
    <property type="entry name" value="S_TKc"/>
    <property type="match status" value="1"/>
</dbReference>
<dbReference type="SUPFAM" id="SSF56112">
    <property type="entry name" value="Protein kinase-like (PK-like)"/>
    <property type="match status" value="1"/>
</dbReference>
<dbReference type="PROSITE" id="PS00107">
    <property type="entry name" value="PROTEIN_KINASE_ATP"/>
    <property type="match status" value="1"/>
</dbReference>
<dbReference type="PROSITE" id="PS50011">
    <property type="entry name" value="PROTEIN_KINASE_DOM"/>
    <property type="match status" value="1"/>
</dbReference>
<dbReference type="PROSITE" id="PS00108">
    <property type="entry name" value="PROTEIN_KINASE_ST"/>
    <property type="match status" value="1"/>
</dbReference>
<organism>
    <name type="scientific">Arabidopsis thaliana</name>
    <name type="common">Mouse-ear cress</name>
    <dbReference type="NCBI Taxonomy" id="3702"/>
    <lineage>
        <taxon>Eukaryota</taxon>
        <taxon>Viridiplantae</taxon>
        <taxon>Streptophyta</taxon>
        <taxon>Embryophyta</taxon>
        <taxon>Tracheophyta</taxon>
        <taxon>Spermatophyta</taxon>
        <taxon>Magnoliopsida</taxon>
        <taxon>eudicotyledons</taxon>
        <taxon>Gunneridae</taxon>
        <taxon>Pentapetalae</taxon>
        <taxon>rosids</taxon>
        <taxon>malvids</taxon>
        <taxon>Brassicales</taxon>
        <taxon>Brassicaceae</taxon>
        <taxon>Camelineae</taxon>
        <taxon>Arabidopsis</taxon>
    </lineage>
</organism>
<protein>
    <recommendedName>
        <fullName evidence="6">Probable serine/threonine-protein kinase PBL26</fullName>
        <ecNumber evidence="6">2.7.11.1</ecNumber>
    </recommendedName>
    <alternativeName>
        <fullName evidence="5">PBS1-like protein 26</fullName>
    </alternativeName>
</protein>
<proteinExistence type="evidence at transcript level"/>
<sequence length="414" mass="46067">MNCFSCFYFHEKKKVPRDSDNSYRRNGEVTGRDNNKTHPENPKTVNEQNKNNDEDKEVTNNIAAQTFSFRELATATKNFRQECLIGEGGFGRVYKGKLEKTGMIVAVKQLDRNGLQGNKEFIVEVLMLSLLHHKHLVNLIGYCADGDQRLLVYEYMSRGSLEDHLLDLTPDQIPLDWDTRIRIALGAAMGLEYLHDKANPPVIYRDLKAANILLDGEFNAKLSDFGLAKLGPVGDKQHVSSRVMGTYGYCAPEYQRTGQLTTKSDVYSFGVVLLELITGRRVIDTTRPKDEQNLVTWAQPVFKEPSRFPELADPSLEGVFPEKALNQAVAVAAMCLQEEATVRPLMSDVVTALGFLGTAPDGSISVPHYDDPPQPSDETSVEDSVAAEERERAVAEAMEWGVASRAHSRNPSAS</sequence>
<feature type="chain" id="PRO_0000403338" description="Probable serine/threonine-protein kinase PBL26">
    <location>
        <begin position="1"/>
        <end position="414"/>
    </location>
</feature>
<feature type="domain" description="Protein kinase" evidence="3">
    <location>
        <begin position="79"/>
        <end position="356"/>
    </location>
</feature>
<feature type="region of interest" description="Disordered" evidence="4">
    <location>
        <begin position="17"/>
        <end position="55"/>
    </location>
</feature>
<feature type="region of interest" description="Disordered" evidence="4">
    <location>
        <begin position="364"/>
        <end position="394"/>
    </location>
</feature>
<feature type="compositionally biased region" description="Basic and acidic residues" evidence="4">
    <location>
        <begin position="17"/>
        <end position="41"/>
    </location>
</feature>
<feature type="active site" description="Proton acceptor" evidence="3">
    <location>
        <position position="206"/>
    </location>
</feature>
<feature type="binding site" evidence="3">
    <location>
        <begin position="85"/>
        <end position="93"/>
    </location>
    <ligand>
        <name>ATP</name>
        <dbReference type="ChEBI" id="CHEBI:30616"/>
    </ligand>
</feature>
<feature type="binding site" evidence="3">
    <location>
        <position position="108"/>
    </location>
    <ligand>
        <name>ATP</name>
        <dbReference type="ChEBI" id="CHEBI:30616"/>
    </ligand>
</feature>
<feature type="modified residue" description="Phosphotyrosine" evidence="1">
    <location>
        <position position="153"/>
    </location>
</feature>
<feature type="modified residue" description="Phosphoserine" evidence="1">
    <location>
        <position position="240"/>
    </location>
</feature>
<feature type="modified residue" description="Phosphothreonine" evidence="1">
    <location>
        <position position="246"/>
    </location>
</feature>
<feature type="modified residue" description="Phosphotyrosine" evidence="1">
    <location>
        <position position="254"/>
    </location>
</feature>
<feature type="lipid moiety-binding region" description="S-palmitoyl cysteine" evidence="2">
    <location>
        <position position="3"/>
    </location>
</feature>
<feature type="sequence conflict" description="In Ref. 3; AAO42873." evidence="6" ref="3">
    <original>K</original>
    <variation>R</variation>
    <location>
        <position position="197"/>
    </location>
</feature>
<evidence type="ECO:0000250" key="1">
    <source>
        <dbReference type="UniProtKB" id="O48814"/>
    </source>
</evidence>
<evidence type="ECO:0000250" key="2">
    <source>
        <dbReference type="UniProtKB" id="Q9FE20"/>
    </source>
</evidence>
<evidence type="ECO:0000255" key="3">
    <source>
        <dbReference type="PROSITE-ProRule" id="PRU00159"/>
    </source>
</evidence>
<evidence type="ECO:0000256" key="4">
    <source>
        <dbReference type="SAM" id="MobiDB-lite"/>
    </source>
</evidence>
<evidence type="ECO:0000303" key="5">
    <source>
    </source>
</evidence>
<evidence type="ECO:0000305" key="6"/>
<comment type="function">
    <text evidence="1">May be involved in plant defense signaling.</text>
</comment>
<comment type="catalytic activity">
    <reaction evidence="6">
        <text>L-seryl-[protein] + ATP = O-phospho-L-seryl-[protein] + ADP + H(+)</text>
        <dbReference type="Rhea" id="RHEA:17989"/>
        <dbReference type="Rhea" id="RHEA-COMP:9863"/>
        <dbReference type="Rhea" id="RHEA-COMP:11604"/>
        <dbReference type="ChEBI" id="CHEBI:15378"/>
        <dbReference type="ChEBI" id="CHEBI:29999"/>
        <dbReference type="ChEBI" id="CHEBI:30616"/>
        <dbReference type="ChEBI" id="CHEBI:83421"/>
        <dbReference type="ChEBI" id="CHEBI:456216"/>
        <dbReference type="EC" id="2.7.11.1"/>
    </reaction>
</comment>
<comment type="catalytic activity">
    <reaction evidence="6">
        <text>L-threonyl-[protein] + ATP = O-phospho-L-threonyl-[protein] + ADP + H(+)</text>
        <dbReference type="Rhea" id="RHEA:46608"/>
        <dbReference type="Rhea" id="RHEA-COMP:11060"/>
        <dbReference type="Rhea" id="RHEA-COMP:11605"/>
        <dbReference type="ChEBI" id="CHEBI:15378"/>
        <dbReference type="ChEBI" id="CHEBI:30013"/>
        <dbReference type="ChEBI" id="CHEBI:30616"/>
        <dbReference type="ChEBI" id="CHEBI:61977"/>
        <dbReference type="ChEBI" id="CHEBI:456216"/>
        <dbReference type="EC" id="2.7.11.1"/>
    </reaction>
</comment>
<comment type="subcellular location">
    <subcellularLocation>
        <location evidence="1">Cell membrane</location>
        <topology evidence="1">Lipid-anchor</topology>
    </subcellularLocation>
</comment>
<comment type="PTM">
    <text evidence="2">Palmitoylation at Cys-3 and Cys-6 are required for plasma membrane location.</text>
</comment>
<comment type="similarity">
    <text evidence="3">Belongs to the protein kinase superfamily. Ser/Thr protein kinase family.</text>
</comment>